<dbReference type="EMBL" id="CU469464">
    <property type="protein sequence ID" value="CAP18576.1"/>
    <property type="molecule type" value="Genomic_DNA"/>
</dbReference>
<dbReference type="SMR" id="B3QZG9"/>
<dbReference type="STRING" id="37692.ATP_00389"/>
<dbReference type="KEGG" id="pml:ATP_00389"/>
<dbReference type="eggNOG" id="COG0222">
    <property type="taxonomic scope" value="Bacteria"/>
</dbReference>
<dbReference type="HOGENOM" id="CLU_086499_3_2_14"/>
<dbReference type="Proteomes" id="UP000002020">
    <property type="component" value="Chromosome"/>
</dbReference>
<dbReference type="GO" id="GO:0022625">
    <property type="term" value="C:cytosolic large ribosomal subunit"/>
    <property type="evidence" value="ECO:0007669"/>
    <property type="project" value="TreeGrafter"/>
</dbReference>
<dbReference type="GO" id="GO:0003729">
    <property type="term" value="F:mRNA binding"/>
    <property type="evidence" value="ECO:0007669"/>
    <property type="project" value="TreeGrafter"/>
</dbReference>
<dbReference type="GO" id="GO:0003735">
    <property type="term" value="F:structural constituent of ribosome"/>
    <property type="evidence" value="ECO:0007669"/>
    <property type="project" value="InterPro"/>
</dbReference>
<dbReference type="GO" id="GO:0006412">
    <property type="term" value="P:translation"/>
    <property type="evidence" value="ECO:0007669"/>
    <property type="project" value="UniProtKB-UniRule"/>
</dbReference>
<dbReference type="Gene3D" id="3.30.1390.10">
    <property type="match status" value="1"/>
</dbReference>
<dbReference type="Gene3D" id="1.20.5.710">
    <property type="entry name" value="Single helix bin"/>
    <property type="match status" value="1"/>
</dbReference>
<dbReference type="HAMAP" id="MF_00368">
    <property type="entry name" value="Ribosomal_bL12"/>
    <property type="match status" value="1"/>
</dbReference>
<dbReference type="InterPro" id="IPR000206">
    <property type="entry name" value="Ribosomal_bL12"/>
</dbReference>
<dbReference type="InterPro" id="IPR013823">
    <property type="entry name" value="Ribosomal_bL12_C"/>
</dbReference>
<dbReference type="InterPro" id="IPR014719">
    <property type="entry name" value="Ribosomal_bL12_C/ClpS-like"/>
</dbReference>
<dbReference type="InterPro" id="IPR008932">
    <property type="entry name" value="Ribosomal_bL12_oligo"/>
</dbReference>
<dbReference type="InterPro" id="IPR036235">
    <property type="entry name" value="Ribosomal_bL12_oligo_N_sf"/>
</dbReference>
<dbReference type="NCBIfam" id="TIGR00855">
    <property type="entry name" value="L12"/>
    <property type="match status" value="1"/>
</dbReference>
<dbReference type="PANTHER" id="PTHR45987">
    <property type="entry name" value="39S RIBOSOMAL PROTEIN L12"/>
    <property type="match status" value="1"/>
</dbReference>
<dbReference type="PANTHER" id="PTHR45987:SF4">
    <property type="entry name" value="LARGE RIBOSOMAL SUBUNIT PROTEIN BL12M"/>
    <property type="match status" value="1"/>
</dbReference>
<dbReference type="Pfam" id="PF00542">
    <property type="entry name" value="Ribosomal_L12"/>
    <property type="match status" value="1"/>
</dbReference>
<dbReference type="Pfam" id="PF16320">
    <property type="entry name" value="Ribosomal_L12_N"/>
    <property type="match status" value="1"/>
</dbReference>
<dbReference type="SUPFAM" id="SSF54736">
    <property type="entry name" value="ClpS-like"/>
    <property type="match status" value="1"/>
</dbReference>
<dbReference type="SUPFAM" id="SSF48300">
    <property type="entry name" value="Ribosomal protein L7/12, oligomerisation (N-terminal) domain"/>
    <property type="match status" value="1"/>
</dbReference>
<gene>
    <name evidence="1" type="primary">rplL</name>
    <name type="ordered locus">ATP_00389</name>
</gene>
<sequence length="127" mass="14254">MAKLTKKNFIDSLREMSLLEVKELVDGLKEEFGIDPNALFVSGSNQDNNKIQVEEKTEFSVIVKDFGDSSNKIPIIKTVKEITGFGLYDIQKLLNTPDAVIQEKISKEKAEEIKNKLELIGAVVEIQ</sequence>
<proteinExistence type="inferred from homology"/>
<keyword id="KW-1185">Reference proteome</keyword>
<keyword id="KW-0687">Ribonucleoprotein</keyword>
<keyword id="KW-0689">Ribosomal protein</keyword>
<organism>
    <name type="scientific">Phytoplasma mali (strain AT)</name>
    <dbReference type="NCBI Taxonomy" id="482235"/>
    <lineage>
        <taxon>Bacteria</taxon>
        <taxon>Bacillati</taxon>
        <taxon>Mycoplasmatota</taxon>
        <taxon>Mollicutes</taxon>
        <taxon>Acholeplasmatales</taxon>
        <taxon>Acholeplasmataceae</taxon>
        <taxon>Candidatus Phytoplasma</taxon>
        <taxon>16SrX (Apple proliferation group)</taxon>
    </lineage>
</organism>
<reference key="1">
    <citation type="journal article" date="2008" name="BMC Genomics">
        <title>The linear chromosome of the plant-pathogenic mycoplasma 'Candidatus Phytoplasma mali'.</title>
        <authorList>
            <person name="Kube M."/>
            <person name="Schneider B."/>
            <person name="Kuhl H."/>
            <person name="Dandekar T."/>
            <person name="Heitmann K."/>
            <person name="Migdoll A.M."/>
            <person name="Reinhardt R."/>
            <person name="Seemueller E."/>
        </authorList>
    </citation>
    <scope>NUCLEOTIDE SEQUENCE [LARGE SCALE GENOMIC DNA]</scope>
    <source>
        <strain>AT</strain>
    </source>
</reference>
<protein>
    <recommendedName>
        <fullName evidence="1">Large ribosomal subunit protein bL12</fullName>
    </recommendedName>
    <alternativeName>
        <fullName evidence="2">50S ribosomal protein L7/L12</fullName>
    </alternativeName>
</protein>
<name>RL7_PHYMT</name>
<comment type="function">
    <text evidence="1">Forms part of the ribosomal stalk which helps the ribosome interact with GTP-bound translation factors. Is thus essential for accurate translation.</text>
</comment>
<comment type="subunit">
    <text evidence="1">Homodimer. Part of the ribosomal stalk of the 50S ribosomal subunit. Forms a multimeric L10(L12)X complex, where L10 forms an elongated spine to which 2 to 4 L12 dimers bind in a sequential fashion. Binds GTP-bound translation factors.</text>
</comment>
<comment type="similarity">
    <text evidence="1">Belongs to the bacterial ribosomal protein bL12 family.</text>
</comment>
<accession>B3QZG9</accession>
<evidence type="ECO:0000255" key="1">
    <source>
        <dbReference type="HAMAP-Rule" id="MF_00368"/>
    </source>
</evidence>
<evidence type="ECO:0000305" key="2"/>
<feature type="chain" id="PRO_1000133856" description="Large ribosomal subunit protein bL12">
    <location>
        <begin position="1"/>
        <end position="127"/>
    </location>
</feature>